<accession>Q04221</accession>
<gene>
    <name type="primary">trans-acting factor</name>
</gene>
<sequence length="123" mass="14098">MEAVIREGGSLPQVRSASRNQQRSGESTKGRKWEKQLRSEMRRWRRRKWPHLKPLAHPAISAEQLLAVIAPQPRPLLLLMWGVVCILPWRGWESSRARGVTHLGGRNSQGRSQGTRVWPLGRP</sequence>
<feature type="chain" id="PRO_0000404264" description="Putative trans-acting factor">
    <location>
        <begin position="1"/>
        <end position="123"/>
    </location>
</feature>
<feature type="region of interest" description="Disordered" evidence="1">
    <location>
        <begin position="1"/>
        <end position="38"/>
    </location>
</feature>
<feature type="region of interest" description="Disordered" evidence="1">
    <location>
        <begin position="100"/>
        <end position="123"/>
    </location>
</feature>
<feature type="compositionally biased region" description="Polar residues" evidence="1">
    <location>
        <begin position="13"/>
        <end position="25"/>
    </location>
</feature>
<feature type="compositionally biased region" description="Basic and acidic residues" evidence="1">
    <location>
        <begin position="26"/>
        <end position="38"/>
    </location>
</feature>
<feature type="compositionally biased region" description="Polar residues" evidence="1">
    <location>
        <begin position="106"/>
        <end position="115"/>
    </location>
</feature>
<reference key="1">
    <citation type="journal article" date="1992" name="Nucleic Acids Res.">
        <title>Complete nucleotide sequence of a highly infectious avian leukosis virus.</title>
        <authorList>
            <person name="Bieth E."/>
            <person name="Darlix J.L."/>
        </authorList>
    </citation>
    <scope>NUCLEOTIDE SEQUENCE [GENOMIC RNA]</scope>
</reference>
<organism>
    <name type="scientific">Avian leukosis virus subgroup A (isolate RSA)</name>
    <name type="common">ALV-A RSA</name>
    <dbReference type="NCBI Taxonomy" id="363745"/>
    <lineage>
        <taxon>Viruses</taxon>
        <taxon>Riboviria</taxon>
        <taxon>Pararnavirae</taxon>
        <taxon>Artverviricota</taxon>
        <taxon>Revtraviricetes</taxon>
        <taxon>Ortervirales</taxon>
        <taxon>Retroviridae</taxon>
        <taxon>Orthoretrovirinae</taxon>
        <taxon>Alpharetrovirus</taxon>
        <taxon>Avian leukosis virus</taxon>
    </lineage>
</organism>
<dbReference type="EMBL" id="M37980">
    <property type="protein sequence ID" value="AAA91267.1"/>
    <property type="molecule type" value="Genomic_RNA"/>
</dbReference>
<dbReference type="PIR" id="S35428">
    <property type="entry name" value="S35428"/>
</dbReference>
<dbReference type="RefSeq" id="NP_040549.1">
    <property type="nucleotide sequence ID" value="NC_001408.1"/>
</dbReference>
<dbReference type="SMR" id="Q04221"/>
<dbReference type="GeneID" id="1491911"/>
<dbReference type="KEGG" id="vg:1491911"/>
<dbReference type="Proteomes" id="UP000002238">
    <property type="component" value="Genome"/>
</dbReference>
<evidence type="ECO:0000256" key="1">
    <source>
        <dbReference type="SAM" id="MobiDB-lite"/>
    </source>
</evidence>
<name>VP14_ALVA</name>
<protein>
    <recommendedName>
        <fullName>Putative trans-acting factor</fullName>
    </recommendedName>
</protein>
<keyword id="KW-1185">Reference proteome</keyword>
<proteinExistence type="predicted"/>